<feature type="chain" id="PRO_0000245815" description="Mitogen-activated protein kinase 15">
    <location>
        <begin position="1"/>
        <end position="576"/>
    </location>
</feature>
<feature type="domain" description="Protein kinase" evidence="3">
    <location>
        <begin position="90"/>
        <end position="381"/>
    </location>
</feature>
<feature type="region of interest" description="Disordered" evidence="4">
    <location>
        <begin position="20"/>
        <end position="50"/>
    </location>
</feature>
<feature type="region of interest" description="Disordered" evidence="4">
    <location>
        <begin position="458"/>
        <end position="535"/>
    </location>
</feature>
<feature type="short sequence motif" description="TXY">
    <location>
        <begin position="252"/>
        <end position="254"/>
    </location>
</feature>
<feature type="compositionally biased region" description="Polar residues" evidence="4">
    <location>
        <begin position="28"/>
        <end position="42"/>
    </location>
</feature>
<feature type="compositionally biased region" description="Basic and acidic residues" evidence="4">
    <location>
        <begin position="477"/>
        <end position="501"/>
    </location>
</feature>
<feature type="compositionally biased region" description="Polar residues" evidence="4">
    <location>
        <begin position="504"/>
        <end position="520"/>
    </location>
</feature>
<feature type="active site" description="Proton acceptor" evidence="3">
    <location>
        <position position="216"/>
    </location>
</feature>
<feature type="binding site" evidence="3">
    <location>
        <begin position="96"/>
        <end position="104"/>
    </location>
    <ligand>
        <name>ATP</name>
        <dbReference type="ChEBI" id="CHEBI:30616"/>
    </ligand>
</feature>
<feature type="binding site" evidence="3">
    <location>
        <position position="119"/>
    </location>
    <ligand>
        <name>ATP</name>
        <dbReference type="ChEBI" id="CHEBI:30616"/>
    </ligand>
</feature>
<feature type="modified residue" description="Phosphothreonine" evidence="2">
    <location>
        <position position="252"/>
    </location>
</feature>
<feature type="modified residue" description="Phosphotyrosine" evidence="2">
    <location>
        <position position="254"/>
    </location>
</feature>
<feature type="modified residue" description="Phosphothreonine" evidence="2">
    <location>
        <position position="257"/>
    </location>
</feature>
<feature type="splice variant" id="VSP_020140" description="In isoform 2." evidence="6">
    <original>ILEYHPQMLEE</original>
    <variation>VMSLLYISSLV</variation>
    <location>
        <begin position="421"/>
        <end position="431"/>
    </location>
</feature>
<feature type="splice variant" id="VSP_020141" description="In isoform 2." evidence="6">
    <location>
        <begin position="432"/>
        <end position="576"/>
    </location>
</feature>
<reference key="1">
    <citation type="journal article" date="2000" name="Nature">
        <title>Sequence and analysis of chromosome 1 of the plant Arabidopsis thaliana.</title>
        <authorList>
            <person name="Theologis A."/>
            <person name="Ecker J.R."/>
            <person name="Palm C.J."/>
            <person name="Federspiel N.A."/>
            <person name="Kaul S."/>
            <person name="White O."/>
            <person name="Alonso J."/>
            <person name="Altafi H."/>
            <person name="Araujo R."/>
            <person name="Bowman C.L."/>
            <person name="Brooks S.Y."/>
            <person name="Buehler E."/>
            <person name="Chan A."/>
            <person name="Chao Q."/>
            <person name="Chen H."/>
            <person name="Cheuk R.F."/>
            <person name="Chin C.W."/>
            <person name="Chung M.K."/>
            <person name="Conn L."/>
            <person name="Conway A.B."/>
            <person name="Conway A.R."/>
            <person name="Creasy T.H."/>
            <person name="Dewar K."/>
            <person name="Dunn P."/>
            <person name="Etgu P."/>
            <person name="Feldblyum T.V."/>
            <person name="Feng J.-D."/>
            <person name="Fong B."/>
            <person name="Fujii C.Y."/>
            <person name="Gill J.E."/>
            <person name="Goldsmith A.D."/>
            <person name="Haas B."/>
            <person name="Hansen N.F."/>
            <person name="Hughes B."/>
            <person name="Huizar L."/>
            <person name="Hunter J.L."/>
            <person name="Jenkins J."/>
            <person name="Johnson-Hopson C."/>
            <person name="Khan S."/>
            <person name="Khaykin E."/>
            <person name="Kim C.J."/>
            <person name="Koo H.L."/>
            <person name="Kremenetskaia I."/>
            <person name="Kurtz D.B."/>
            <person name="Kwan A."/>
            <person name="Lam B."/>
            <person name="Langin-Hooper S."/>
            <person name="Lee A."/>
            <person name="Lee J.M."/>
            <person name="Lenz C.A."/>
            <person name="Li J.H."/>
            <person name="Li Y.-P."/>
            <person name="Lin X."/>
            <person name="Liu S.X."/>
            <person name="Liu Z.A."/>
            <person name="Luros J.S."/>
            <person name="Maiti R."/>
            <person name="Marziali A."/>
            <person name="Militscher J."/>
            <person name="Miranda M."/>
            <person name="Nguyen M."/>
            <person name="Nierman W.C."/>
            <person name="Osborne B.I."/>
            <person name="Pai G."/>
            <person name="Peterson J."/>
            <person name="Pham P.K."/>
            <person name="Rizzo M."/>
            <person name="Rooney T."/>
            <person name="Rowley D."/>
            <person name="Sakano H."/>
            <person name="Salzberg S.L."/>
            <person name="Schwartz J.R."/>
            <person name="Shinn P."/>
            <person name="Southwick A.M."/>
            <person name="Sun H."/>
            <person name="Tallon L.J."/>
            <person name="Tambunga G."/>
            <person name="Toriumi M.J."/>
            <person name="Town C.D."/>
            <person name="Utterback T."/>
            <person name="Van Aken S."/>
            <person name="Vaysberg M."/>
            <person name="Vysotskaia V.S."/>
            <person name="Walker M."/>
            <person name="Wu D."/>
            <person name="Yu G."/>
            <person name="Fraser C.M."/>
            <person name="Venter J.C."/>
            <person name="Davis R.W."/>
        </authorList>
    </citation>
    <scope>NUCLEOTIDE SEQUENCE [LARGE SCALE GENOMIC DNA]</scope>
    <source>
        <strain>cv. Columbia</strain>
    </source>
</reference>
<reference key="2">
    <citation type="journal article" date="2017" name="Plant J.">
        <title>Araport11: a complete reannotation of the Arabidopsis thaliana reference genome.</title>
        <authorList>
            <person name="Cheng C.Y."/>
            <person name="Krishnakumar V."/>
            <person name="Chan A.P."/>
            <person name="Thibaud-Nissen F."/>
            <person name="Schobel S."/>
            <person name="Town C.D."/>
        </authorList>
    </citation>
    <scope>GENOME REANNOTATION</scope>
    <source>
        <strain>cv. Columbia</strain>
    </source>
</reference>
<reference key="3">
    <citation type="journal article" date="2003" name="Science">
        <title>Empirical analysis of transcriptional activity in the Arabidopsis genome.</title>
        <authorList>
            <person name="Yamada K."/>
            <person name="Lim J."/>
            <person name="Dale J.M."/>
            <person name="Chen H."/>
            <person name="Shinn P."/>
            <person name="Palm C.J."/>
            <person name="Southwick A.M."/>
            <person name="Wu H.C."/>
            <person name="Kim C.J."/>
            <person name="Nguyen M."/>
            <person name="Pham P.K."/>
            <person name="Cheuk R.F."/>
            <person name="Karlin-Newmann G."/>
            <person name="Liu S.X."/>
            <person name="Lam B."/>
            <person name="Sakano H."/>
            <person name="Wu T."/>
            <person name="Yu G."/>
            <person name="Miranda M."/>
            <person name="Quach H.L."/>
            <person name="Tripp M."/>
            <person name="Chang C.H."/>
            <person name="Lee J.M."/>
            <person name="Toriumi M.J."/>
            <person name="Chan M.M."/>
            <person name="Tang C.C."/>
            <person name="Onodera C.S."/>
            <person name="Deng J.M."/>
            <person name="Akiyama K."/>
            <person name="Ansari Y."/>
            <person name="Arakawa T."/>
            <person name="Banh J."/>
            <person name="Banno F."/>
            <person name="Bowser L."/>
            <person name="Brooks S.Y."/>
            <person name="Carninci P."/>
            <person name="Chao Q."/>
            <person name="Choy N."/>
            <person name="Enju A."/>
            <person name="Goldsmith A.D."/>
            <person name="Gurjal M."/>
            <person name="Hansen N.F."/>
            <person name="Hayashizaki Y."/>
            <person name="Johnson-Hopson C."/>
            <person name="Hsuan V.W."/>
            <person name="Iida K."/>
            <person name="Karnes M."/>
            <person name="Khan S."/>
            <person name="Koesema E."/>
            <person name="Ishida J."/>
            <person name="Jiang P.X."/>
            <person name="Jones T."/>
            <person name="Kawai J."/>
            <person name="Kamiya A."/>
            <person name="Meyers C."/>
            <person name="Nakajima M."/>
            <person name="Narusaka M."/>
            <person name="Seki M."/>
            <person name="Sakurai T."/>
            <person name="Satou M."/>
            <person name="Tamse R."/>
            <person name="Vaysberg M."/>
            <person name="Wallender E.K."/>
            <person name="Wong C."/>
            <person name="Yamamura Y."/>
            <person name="Yuan S."/>
            <person name="Shinozaki K."/>
            <person name="Davis R.W."/>
            <person name="Theologis A."/>
            <person name="Ecker J.R."/>
        </authorList>
    </citation>
    <scope>NUCLEOTIDE SEQUENCE [LARGE SCALE MRNA] (ISOFORM 2)</scope>
    <source>
        <strain>cv. Columbia</strain>
    </source>
</reference>
<reference key="4">
    <citation type="journal article" date="2002" name="Trends Plant Sci.">
        <title>Mitogen-activated protein kinase cascades in plants: a new nomenclature.</title>
        <authorList>
            <consortium name="MAPK group"/>
        </authorList>
    </citation>
    <scope>GENE FAMILY</scope>
    <scope>NOMENCLATURE</scope>
</reference>
<reference key="5">
    <citation type="journal article" date="2006" name="Trends Plant Sci.">
        <title>Ancient signals: comparative genomics of plant MAPK and MAPKK gene families.</title>
        <authorList>
            <person name="Hamel L.P."/>
            <person name="Nicole M.C."/>
            <person name="Sritubtim S."/>
            <person name="Morency M.J."/>
            <person name="Ellis M."/>
            <person name="Ehlting J."/>
            <person name="Beaudoin N."/>
            <person name="Barbazuk B."/>
            <person name="Klessig D."/>
            <person name="Lee J."/>
            <person name="Martin G."/>
            <person name="Mundy J."/>
            <person name="Ohashi Y."/>
            <person name="Scheel D."/>
            <person name="Sheen J."/>
            <person name="Xing T."/>
            <person name="Zhang S."/>
            <person name="Seguin A."/>
            <person name="Ellis B.E."/>
        </authorList>
    </citation>
    <scope>GENE FAMILY</scope>
</reference>
<reference key="6">
    <citation type="journal article" date="2008" name="Plant Signal. Behav.">
        <title>Comprehensive analysis of protein-protein interactions between Arabidopsis MAPKs and MAPK kinases helps define potential MAPK signalling modules.</title>
        <authorList>
            <person name="Lee J.S."/>
            <person name="Huh K.W."/>
            <person name="Bhargava A."/>
            <person name="Ellis B.E."/>
        </authorList>
    </citation>
    <scope>INTERACTION WITH MKK7</scope>
</reference>
<name>MPK15_ARATH</name>
<evidence type="ECO:0000250" key="1"/>
<evidence type="ECO:0000250" key="2">
    <source>
        <dbReference type="UniProtKB" id="Q39026"/>
    </source>
</evidence>
<evidence type="ECO:0000255" key="3">
    <source>
        <dbReference type="PROSITE-ProRule" id="PRU00159"/>
    </source>
</evidence>
<evidence type="ECO:0000256" key="4">
    <source>
        <dbReference type="SAM" id="MobiDB-lite"/>
    </source>
</evidence>
<evidence type="ECO:0000269" key="5">
    <source>
    </source>
</evidence>
<evidence type="ECO:0000303" key="6">
    <source>
    </source>
</evidence>
<evidence type="ECO:0000305" key="7"/>
<keyword id="KW-0025">Alternative splicing</keyword>
<keyword id="KW-0067">ATP-binding</keyword>
<keyword id="KW-0418">Kinase</keyword>
<keyword id="KW-0547">Nucleotide-binding</keyword>
<keyword id="KW-0597">Phosphoprotein</keyword>
<keyword id="KW-1185">Reference proteome</keyword>
<keyword id="KW-0723">Serine/threonine-protein kinase</keyword>
<keyword id="KW-0808">Transferase</keyword>
<protein>
    <recommendedName>
        <fullName>Mitogen-activated protein kinase 15</fullName>
        <shortName>AtMPK15</shortName>
        <shortName>MAP kinase 15</shortName>
        <ecNumber>2.7.11.24</ecNumber>
    </recommendedName>
</protein>
<gene>
    <name type="primary">MPK15</name>
    <name type="ordered locus">At1g73670</name>
    <name type="ORF">F25P22.9</name>
</gene>
<proteinExistence type="evidence at protein level"/>
<sequence>MGGGGNLVDGVRRWLFFQRRPSSSSSSNNHDQIQNPPTVSNPNDDEDLKKLTDPSKLRQIKVQQRNHLPMEKKGIPNAEFFTEYGEANRYQIQEVVGKGSYGVVGSAIDTHTGERVAIKKINDVFDHISDATRILREIKLLRLLLHPDVVEIKHIMLPPSRREFRDVYVVFELMESDLHQVIKANDDLTPEHHQFFLYQLLRGLKYVHAANVFHRDLKPKNILANADCKLKICDFGLARVSFNDAPTAIFWTDYVATRWYRAPELCGSFFSKYTPAIDIWSVGCIFAEMLLGKPLFPGKNVVHQLDIMTDFLGTPPPEAISKIRNDKARRYLGNMRKKQPVPFSKKFPKADPSALRLLERLIAFDPKDRPSAEEALADPYFNGLSSKVREPSTQPISKLEFEFERKKLTKDDIRELIYREILEYHPQMLEEYLRGGNQLSFMYPSGVDRFRRQFAHLEENQGPGGRSNALQRQHASLPRERVPASKNETVEERSNDIERRTTAAVASTLDSPKASQQAEGTENGGGGGYSARNLMKSSSISGSKCIGVQSKTNIEDSIVEEQDETVAVKVASLHNS</sequence>
<dbReference type="EC" id="2.7.11.24"/>
<dbReference type="EMBL" id="AC012679">
    <property type="protein sequence ID" value="AAG52072.1"/>
    <property type="status" value="ALT_SEQ"/>
    <property type="molecule type" value="Genomic_DNA"/>
</dbReference>
<dbReference type="EMBL" id="CP002684">
    <property type="protein sequence ID" value="AEE35495.1"/>
    <property type="molecule type" value="Genomic_DNA"/>
</dbReference>
<dbReference type="EMBL" id="AF387019">
    <property type="protein sequence ID" value="AAK62464.1"/>
    <property type="molecule type" value="mRNA"/>
</dbReference>
<dbReference type="EMBL" id="BT001159">
    <property type="protein sequence ID" value="AAN65046.1"/>
    <property type="molecule type" value="mRNA"/>
</dbReference>
<dbReference type="PIR" id="G96763">
    <property type="entry name" value="G96763"/>
</dbReference>
<dbReference type="RefSeq" id="NP_565070.2">
    <molecule id="Q9C9U4-1"/>
    <property type="nucleotide sequence ID" value="NM_106026.3"/>
</dbReference>
<dbReference type="SMR" id="Q9C9U4"/>
<dbReference type="BioGRID" id="28921">
    <property type="interactions" value="1"/>
</dbReference>
<dbReference type="FunCoup" id="Q9C9U4">
    <property type="interactions" value="139"/>
</dbReference>
<dbReference type="IntAct" id="Q9C9U4">
    <property type="interactions" value="1"/>
</dbReference>
<dbReference type="STRING" id="3702.Q9C9U4"/>
<dbReference type="iPTMnet" id="Q9C9U4"/>
<dbReference type="PaxDb" id="3702-AT1G73670.1"/>
<dbReference type="ProteomicsDB" id="239071">
    <molecule id="Q9C9U4-1"/>
</dbReference>
<dbReference type="EnsemblPlants" id="AT1G73670.1">
    <molecule id="Q9C9U4-1"/>
    <property type="protein sequence ID" value="AT1G73670.1"/>
    <property type="gene ID" value="AT1G73670"/>
</dbReference>
<dbReference type="GeneID" id="843702"/>
<dbReference type="Gramene" id="AT1G73670.1">
    <molecule id="Q9C9U4-1"/>
    <property type="protein sequence ID" value="AT1G73670.1"/>
    <property type="gene ID" value="AT1G73670"/>
</dbReference>
<dbReference type="KEGG" id="ath:AT1G73670"/>
<dbReference type="Araport" id="AT1G73670"/>
<dbReference type="TAIR" id="AT1G73670">
    <property type="gene designation" value="MPK15"/>
</dbReference>
<dbReference type="eggNOG" id="KOG0660">
    <property type="taxonomic scope" value="Eukaryota"/>
</dbReference>
<dbReference type="HOGENOM" id="CLU_000288_181_5_1"/>
<dbReference type="InParanoid" id="Q9C9U4"/>
<dbReference type="OMA" id="GNQLSFM"/>
<dbReference type="PhylomeDB" id="Q9C9U4"/>
<dbReference type="PRO" id="PR:Q9C9U4"/>
<dbReference type="Proteomes" id="UP000006548">
    <property type="component" value="Chromosome 1"/>
</dbReference>
<dbReference type="ExpressionAtlas" id="Q9C9U4">
    <property type="expression patterns" value="baseline and differential"/>
</dbReference>
<dbReference type="GO" id="GO:0005524">
    <property type="term" value="F:ATP binding"/>
    <property type="evidence" value="ECO:0007669"/>
    <property type="project" value="UniProtKB-KW"/>
</dbReference>
<dbReference type="GO" id="GO:0004707">
    <property type="term" value="F:MAP kinase activity"/>
    <property type="evidence" value="ECO:0000250"/>
    <property type="project" value="TAIR"/>
</dbReference>
<dbReference type="GO" id="GO:0106310">
    <property type="term" value="F:protein serine kinase activity"/>
    <property type="evidence" value="ECO:0007669"/>
    <property type="project" value="RHEA"/>
</dbReference>
<dbReference type="CDD" id="cd07859">
    <property type="entry name" value="STKc_TDY_MAPK"/>
    <property type="match status" value="1"/>
</dbReference>
<dbReference type="FunFam" id="1.10.510.10:FF:000017">
    <property type="entry name" value="Mitogen-activated protein kinase"/>
    <property type="match status" value="1"/>
</dbReference>
<dbReference type="FunFam" id="3.30.200.20:FF:000046">
    <property type="entry name" value="Mitogen-activated protein kinase"/>
    <property type="match status" value="1"/>
</dbReference>
<dbReference type="FunFam" id="3.30.200.20:FF:000578">
    <property type="entry name" value="Mitogen-activated protein kinase"/>
    <property type="match status" value="1"/>
</dbReference>
<dbReference type="Gene3D" id="3.30.200.20">
    <property type="entry name" value="Phosphorylase Kinase, domain 1"/>
    <property type="match status" value="1"/>
</dbReference>
<dbReference type="Gene3D" id="1.10.510.10">
    <property type="entry name" value="Transferase(Phosphotransferase) domain 1"/>
    <property type="match status" value="1"/>
</dbReference>
<dbReference type="InterPro" id="IPR011009">
    <property type="entry name" value="Kinase-like_dom_sf"/>
</dbReference>
<dbReference type="InterPro" id="IPR050117">
    <property type="entry name" value="MAP_kinase"/>
</dbReference>
<dbReference type="InterPro" id="IPR003527">
    <property type="entry name" value="MAP_kinase_CS"/>
</dbReference>
<dbReference type="InterPro" id="IPR000719">
    <property type="entry name" value="Prot_kinase_dom"/>
</dbReference>
<dbReference type="InterPro" id="IPR017441">
    <property type="entry name" value="Protein_kinase_ATP_BS"/>
</dbReference>
<dbReference type="PANTHER" id="PTHR24055">
    <property type="entry name" value="MITOGEN-ACTIVATED PROTEIN KINASE"/>
    <property type="match status" value="1"/>
</dbReference>
<dbReference type="Pfam" id="PF00069">
    <property type="entry name" value="Pkinase"/>
    <property type="match status" value="1"/>
</dbReference>
<dbReference type="SMART" id="SM00220">
    <property type="entry name" value="S_TKc"/>
    <property type="match status" value="1"/>
</dbReference>
<dbReference type="SUPFAM" id="SSF56112">
    <property type="entry name" value="Protein kinase-like (PK-like)"/>
    <property type="match status" value="1"/>
</dbReference>
<dbReference type="PROSITE" id="PS01351">
    <property type="entry name" value="MAPK"/>
    <property type="match status" value="1"/>
</dbReference>
<dbReference type="PROSITE" id="PS00107">
    <property type="entry name" value="PROTEIN_KINASE_ATP"/>
    <property type="match status" value="1"/>
</dbReference>
<dbReference type="PROSITE" id="PS50011">
    <property type="entry name" value="PROTEIN_KINASE_DOM"/>
    <property type="match status" value="1"/>
</dbReference>
<comment type="catalytic activity">
    <reaction>
        <text>L-seryl-[protein] + ATP = O-phospho-L-seryl-[protein] + ADP + H(+)</text>
        <dbReference type="Rhea" id="RHEA:17989"/>
        <dbReference type="Rhea" id="RHEA-COMP:9863"/>
        <dbReference type="Rhea" id="RHEA-COMP:11604"/>
        <dbReference type="ChEBI" id="CHEBI:15378"/>
        <dbReference type="ChEBI" id="CHEBI:29999"/>
        <dbReference type="ChEBI" id="CHEBI:30616"/>
        <dbReference type="ChEBI" id="CHEBI:83421"/>
        <dbReference type="ChEBI" id="CHEBI:456216"/>
        <dbReference type="EC" id="2.7.11.24"/>
    </reaction>
</comment>
<comment type="catalytic activity">
    <reaction>
        <text>L-threonyl-[protein] + ATP = O-phospho-L-threonyl-[protein] + ADP + H(+)</text>
        <dbReference type="Rhea" id="RHEA:46608"/>
        <dbReference type="Rhea" id="RHEA-COMP:11060"/>
        <dbReference type="Rhea" id="RHEA-COMP:11605"/>
        <dbReference type="ChEBI" id="CHEBI:15378"/>
        <dbReference type="ChEBI" id="CHEBI:30013"/>
        <dbReference type="ChEBI" id="CHEBI:30616"/>
        <dbReference type="ChEBI" id="CHEBI:61977"/>
        <dbReference type="ChEBI" id="CHEBI:456216"/>
        <dbReference type="EC" id="2.7.11.24"/>
    </reaction>
</comment>
<comment type="activity regulation">
    <text evidence="1">Activated by threonine and tyrosine phosphorylation.</text>
</comment>
<comment type="subunit">
    <text evidence="5">Interacts with MKK7.</text>
</comment>
<comment type="alternative products">
    <event type="alternative splicing"/>
    <isoform>
        <id>Q9C9U4-1</id>
        <name>1</name>
        <sequence type="displayed"/>
    </isoform>
    <isoform>
        <id>Q9C9U4-2</id>
        <name>2</name>
        <sequence type="described" ref="VSP_020140 VSP_020141"/>
    </isoform>
</comment>
<comment type="domain">
    <text>The TXY motif contains the threonine and tyrosine residues whose phosphorylation activates the MAP kinases.</text>
</comment>
<comment type="PTM">
    <text evidence="1">Dually phosphorylated on Thr-252 and Tyr-254, which activates the enzyme.</text>
</comment>
<comment type="miscellaneous">
    <molecule>Isoform 1</molecule>
    <text>Inferred from the gene model conservation between members of the family.</text>
</comment>
<comment type="similarity">
    <text evidence="7">Belongs to the protein kinase superfamily. CMGC Ser/Thr protein kinase family. MAP kinase subfamily.</text>
</comment>
<comment type="sequence caution" evidence="7">
    <conflict type="erroneous gene model prediction">
        <sequence resource="EMBL-CDS" id="AAG52072"/>
    </conflict>
</comment>
<organism>
    <name type="scientific">Arabidopsis thaliana</name>
    <name type="common">Mouse-ear cress</name>
    <dbReference type="NCBI Taxonomy" id="3702"/>
    <lineage>
        <taxon>Eukaryota</taxon>
        <taxon>Viridiplantae</taxon>
        <taxon>Streptophyta</taxon>
        <taxon>Embryophyta</taxon>
        <taxon>Tracheophyta</taxon>
        <taxon>Spermatophyta</taxon>
        <taxon>Magnoliopsida</taxon>
        <taxon>eudicotyledons</taxon>
        <taxon>Gunneridae</taxon>
        <taxon>Pentapetalae</taxon>
        <taxon>rosids</taxon>
        <taxon>malvids</taxon>
        <taxon>Brassicales</taxon>
        <taxon>Brassicaceae</taxon>
        <taxon>Camelineae</taxon>
        <taxon>Arabidopsis</taxon>
    </lineage>
</organism>
<accession>Q9C9U4</accession>
<accession>Q94EY5</accession>